<evidence type="ECO:0000255" key="1">
    <source>
        <dbReference type="HAMAP-Rule" id="MF_00150"/>
    </source>
</evidence>
<keyword id="KW-0028">Amino-acid biosynthesis</keyword>
<keyword id="KW-0055">Arginine biosynthesis</keyword>
<keyword id="KW-0963">Cytoplasm</keyword>
<keyword id="KW-0521">NADP</keyword>
<keyword id="KW-0560">Oxidoreductase</keyword>
<organism>
    <name type="scientific">Ehrlichia canis (strain Jake)</name>
    <dbReference type="NCBI Taxonomy" id="269484"/>
    <lineage>
        <taxon>Bacteria</taxon>
        <taxon>Pseudomonadati</taxon>
        <taxon>Pseudomonadota</taxon>
        <taxon>Alphaproteobacteria</taxon>
        <taxon>Rickettsiales</taxon>
        <taxon>Anaplasmataceae</taxon>
        <taxon>Ehrlichia</taxon>
    </lineage>
</organism>
<reference key="1">
    <citation type="journal article" date="2006" name="J. Bacteriol.">
        <title>The genome of the obligately intracellular bacterium Ehrlichia canis reveals themes of complex membrane structure and immune evasion strategies.</title>
        <authorList>
            <person name="Mavromatis K."/>
            <person name="Doyle C.K."/>
            <person name="Lykidis A."/>
            <person name="Ivanova N."/>
            <person name="Francino M.P."/>
            <person name="Chain P."/>
            <person name="Shin M."/>
            <person name="Malfatti S."/>
            <person name="Larimer F."/>
            <person name="Copeland A."/>
            <person name="Detter J.C."/>
            <person name="Land M."/>
            <person name="Richardson P.M."/>
            <person name="Yu X.J."/>
            <person name="Walker D.H."/>
            <person name="McBride J.W."/>
            <person name="Kyrpides N.C."/>
        </authorList>
    </citation>
    <scope>NUCLEOTIDE SEQUENCE [LARGE SCALE GENOMIC DNA]</scope>
    <source>
        <strain>Jake</strain>
    </source>
</reference>
<dbReference type="EC" id="1.2.1.38" evidence="1"/>
<dbReference type="EMBL" id="CP000107">
    <property type="protein sequence ID" value="AAZ68851.1"/>
    <property type="molecule type" value="Genomic_DNA"/>
</dbReference>
<dbReference type="RefSeq" id="WP_011304928.1">
    <property type="nucleotide sequence ID" value="NC_007354.1"/>
</dbReference>
<dbReference type="SMR" id="Q3YR04"/>
<dbReference type="FunCoup" id="Q3YR04">
    <property type="interactions" value="186"/>
</dbReference>
<dbReference type="STRING" id="269484.Ecaj_0820"/>
<dbReference type="KEGG" id="ecn:Ecaj_0820"/>
<dbReference type="eggNOG" id="COG0002">
    <property type="taxonomic scope" value="Bacteria"/>
</dbReference>
<dbReference type="HOGENOM" id="CLU_006384_0_1_5"/>
<dbReference type="InParanoid" id="Q3YR04"/>
<dbReference type="UniPathway" id="UPA00068">
    <property type="reaction ID" value="UER00108"/>
</dbReference>
<dbReference type="Proteomes" id="UP000000435">
    <property type="component" value="Chromosome"/>
</dbReference>
<dbReference type="GO" id="GO:0005737">
    <property type="term" value="C:cytoplasm"/>
    <property type="evidence" value="ECO:0007669"/>
    <property type="project" value="UniProtKB-SubCell"/>
</dbReference>
<dbReference type="GO" id="GO:0003942">
    <property type="term" value="F:N-acetyl-gamma-glutamyl-phosphate reductase activity"/>
    <property type="evidence" value="ECO:0007669"/>
    <property type="project" value="UniProtKB-UniRule"/>
</dbReference>
<dbReference type="GO" id="GO:0051287">
    <property type="term" value="F:NAD binding"/>
    <property type="evidence" value="ECO:0007669"/>
    <property type="project" value="InterPro"/>
</dbReference>
<dbReference type="GO" id="GO:0070401">
    <property type="term" value="F:NADP+ binding"/>
    <property type="evidence" value="ECO:0007669"/>
    <property type="project" value="InterPro"/>
</dbReference>
<dbReference type="GO" id="GO:0006526">
    <property type="term" value="P:L-arginine biosynthetic process"/>
    <property type="evidence" value="ECO:0007669"/>
    <property type="project" value="UniProtKB-UniRule"/>
</dbReference>
<dbReference type="CDD" id="cd23934">
    <property type="entry name" value="AGPR_1_C"/>
    <property type="match status" value="1"/>
</dbReference>
<dbReference type="CDD" id="cd17895">
    <property type="entry name" value="AGPR_1_N"/>
    <property type="match status" value="1"/>
</dbReference>
<dbReference type="FunFam" id="3.30.360.10:FF:000014">
    <property type="entry name" value="N-acetyl-gamma-glutamyl-phosphate reductase"/>
    <property type="match status" value="1"/>
</dbReference>
<dbReference type="Gene3D" id="3.30.360.10">
    <property type="entry name" value="Dihydrodipicolinate Reductase, domain 2"/>
    <property type="match status" value="1"/>
</dbReference>
<dbReference type="Gene3D" id="3.40.50.720">
    <property type="entry name" value="NAD(P)-binding Rossmann-like Domain"/>
    <property type="match status" value="1"/>
</dbReference>
<dbReference type="HAMAP" id="MF_00150">
    <property type="entry name" value="ArgC_type1"/>
    <property type="match status" value="1"/>
</dbReference>
<dbReference type="InterPro" id="IPR023013">
    <property type="entry name" value="AGPR_AS"/>
</dbReference>
<dbReference type="InterPro" id="IPR000706">
    <property type="entry name" value="AGPR_type-1"/>
</dbReference>
<dbReference type="InterPro" id="IPR036291">
    <property type="entry name" value="NAD(P)-bd_dom_sf"/>
</dbReference>
<dbReference type="InterPro" id="IPR050085">
    <property type="entry name" value="NAGSA_dehydrogenase"/>
</dbReference>
<dbReference type="InterPro" id="IPR000534">
    <property type="entry name" value="Semialdehyde_DH_NAD-bd"/>
</dbReference>
<dbReference type="NCBIfam" id="TIGR01850">
    <property type="entry name" value="argC"/>
    <property type="match status" value="1"/>
</dbReference>
<dbReference type="PANTHER" id="PTHR32338:SF10">
    <property type="entry name" value="N-ACETYL-GAMMA-GLUTAMYL-PHOSPHATE REDUCTASE, CHLOROPLASTIC-RELATED"/>
    <property type="match status" value="1"/>
</dbReference>
<dbReference type="PANTHER" id="PTHR32338">
    <property type="entry name" value="N-ACETYL-GAMMA-GLUTAMYL-PHOSPHATE REDUCTASE, CHLOROPLASTIC-RELATED-RELATED"/>
    <property type="match status" value="1"/>
</dbReference>
<dbReference type="Pfam" id="PF01118">
    <property type="entry name" value="Semialdhyde_dh"/>
    <property type="match status" value="1"/>
</dbReference>
<dbReference type="Pfam" id="PF22698">
    <property type="entry name" value="Semialdhyde_dhC_1"/>
    <property type="match status" value="1"/>
</dbReference>
<dbReference type="SMART" id="SM00859">
    <property type="entry name" value="Semialdhyde_dh"/>
    <property type="match status" value="1"/>
</dbReference>
<dbReference type="SUPFAM" id="SSF55347">
    <property type="entry name" value="Glyceraldehyde-3-phosphate dehydrogenase-like, C-terminal domain"/>
    <property type="match status" value="1"/>
</dbReference>
<dbReference type="SUPFAM" id="SSF51735">
    <property type="entry name" value="NAD(P)-binding Rossmann-fold domains"/>
    <property type="match status" value="1"/>
</dbReference>
<dbReference type="PROSITE" id="PS01224">
    <property type="entry name" value="ARGC"/>
    <property type="match status" value="1"/>
</dbReference>
<accession>Q3YR04</accession>
<comment type="function">
    <text evidence="1">Catalyzes the NADPH-dependent reduction of N-acetyl-5-glutamyl phosphate to yield N-acetyl-L-glutamate 5-semialdehyde.</text>
</comment>
<comment type="catalytic activity">
    <reaction evidence="1">
        <text>N-acetyl-L-glutamate 5-semialdehyde + phosphate + NADP(+) = N-acetyl-L-glutamyl 5-phosphate + NADPH + H(+)</text>
        <dbReference type="Rhea" id="RHEA:21588"/>
        <dbReference type="ChEBI" id="CHEBI:15378"/>
        <dbReference type="ChEBI" id="CHEBI:29123"/>
        <dbReference type="ChEBI" id="CHEBI:43474"/>
        <dbReference type="ChEBI" id="CHEBI:57783"/>
        <dbReference type="ChEBI" id="CHEBI:57936"/>
        <dbReference type="ChEBI" id="CHEBI:58349"/>
        <dbReference type="EC" id="1.2.1.38"/>
    </reaction>
</comment>
<comment type="pathway">
    <text evidence="1">Amino-acid biosynthesis; L-arginine biosynthesis; N(2)-acetyl-L-ornithine from L-glutamate: step 3/4.</text>
</comment>
<comment type="subcellular location">
    <subcellularLocation>
        <location evidence="1">Cytoplasm</location>
    </subcellularLocation>
</comment>
<comment type="similarity">
    <text evidence="1">Belongs to the NAGSA dehydrogenase family. Type 1 subfamily.</text>
</comment>
<gene>
    <name evidence="1" type="primary">argC</name>
    <name type="ordered locus">Ecaj_0820</name>
</gene>
<protein>
    <recommendedName>
        <fullName evidence="1">N-acetyl-gamma-glutamyl-phosphate reductase</fullName>
        <shortName evidence="1">AGPR</shortName>
        <ecNumber evidence="1">1.2.1.38</ecNumber>
    </recommendedName>
    <alternativeName>
        <fullName evidence="1">N-acetyl-glutamate semialdehyde dehydrogenase</fullName>
        <shortName evidence="1">NAGSA dehydrogenase</shortName>
    </alternativeName>
</protein>
<proteinExistence type="inferred from homology"/>
<name>ARGC_EHRCJ</name>
<sequence>MSYQVSVAVVGATGYVGVELVRLLLAHPMVKIRYLCATQSTGKLLSSSYFHISQNYISISVSSFDDIDLDKLDVVFLCLPHGASSEIVKKIHNVVKVIDLSADFRIKDPDIYKQWYGVHYCPDLIKDFVYGLTEIYYEDIQKSSFIACPGCYPTSVLIPLFPLLRLRLVKSNNIIVDAKSGVSGAGRSVKQDNLFCEVYDAIKSYKVSNHRHIPEIEQELCFAACREDINLQFVPNLIPVKRGMMSNIYLELEVGVSLTDVREALLLFYRDSFFVVVDEEKAITTRSVVGTNYCYLGIFPGRLPNTIVIISVIDNLLKGAAGQAVQNFNVMMSYEEKLALSNIPYF</sequence>
<feature type="chain" id="PRO_1000010993" description="N-acetyl-gamma-glutamyl-phosphate reductase">
    <location>
        <begin position="1"/>
        <end position="346"/>
    </location>
</feature>
<feature type="active site" evidence="1">
    <location>
        <position position="151"/>
    </location>
</feature>